<proteinExistence type="inferred from homology"/>
<organism>
    <name type="scientific">Acaryochloris marina (strain MBIC 11017)</name>
    <dbReference type="NCBI Taxonomy" id="329726"/>
    <lineage>
        <taxon>Bacteria</taxon>
        <taxon>Bacillati</taxon>
        <taxon>Cyanobacteriota</taxon>
        <taxon>Cyanophyceae</taxon>
        <taxon>Acaryochloridales</taxon>
        <taxon>Acaryochloridaceae</taxon>
        <taxon>Acaryochloris</taxon>
    </lineage>
</organism>
<keyword id="KW-0963">Cytoplasm</keyword>
<keyword id="KW-0227">DNA damage</keyword>
<keyword id="KW-0228">DNA excision</keyword>
<keyword id="KW-0234">DNA repair</keyword>
<keyword id="KW-0267">Excision nuclease</keyword>
<keyword id="KW-1185">Reference proteome</keyword>
<keyword id="KW-0742">SOS response</keyword>
<protein>
    <recommendedName>
        <fullName evidence="1">UvrABC system protein C</fullName>
        <shortName evidence="1">Protein UvrC</shortName>
    </recommendedName>
    <alternativeName>
        <fullName evidence="1">Excinuclease ABC subunit C</fullName>
    </alternativeName>
</protein>
<accession>B0C2T9</accession>
<evidence type="ECO:0000255" key="1">
    <source>
        <dbReference type="HAMAP-Rule" id="MF_00203"/>
    </source>
</evidence>
<reference key="1">
    <citation type="journal article" date="2008" name="Proc. Natl. Acad. Sci. U.S.A.">
        <title>Niche adaptation and genome expansion in the chlorophyll d-producing cyanobacterium Acaryochloris marina.</title>
        <authorList>
            <person name="Swingley W.D."/>
            <person name="Chen M."/>
            <person name="Cheung P.C."/>
            <person name="Conrad A.L."/>
            <person name="Dejesa L.C."/>
            <person name="Hao J."/>
            <person name="Honchak B.M."/>
            <person name="Karbach L.E."/>
            <person name="Kurdoglu A."/>
            <person name="Lahiri S."/>
            <person name="Mastrian S.D."/>
            <person name="Miyashita H."/>
            <person name="Page L."/>
            <person name="Ramakrishna P."/>
            <person name="Satoh S."/>
            <person name="Sattley W.M."/>
            <person name="Shimada Y."/>
            <person name="Taylor H.L."/>
            <person name="Tomo T."/>
            <person name="Tsuchiya T."/>
            <person name="Wang Z.T."/>
            <person name="Raymond J."/>
            <person name="Mimuro M."/>
            <person name="Blankenship R.E."/>
            <person name="Touchman J.W."/>
        </authorList>
    </citation>
    <scope>NUCLEOTIDE SEQUENCE [LARGE SCALE GENOMIC DNA]</scope>
    <source>
        <strain>MBIC 11017</strain>
    </source>
</reference>
<dbReference type="EMBL" id="CP000828">
    <property type="protein sequence ID" value="ABW26155.1"/>
    <property type="molecule type" value="Genomic_DNA"/>
</dbReference>
<dbReference type="RefSeq" id="WP_012161708.1">
    <property type="nucleotide sequence ID" value="NC_009925.1"/>
</dbReference>
<dbReference type="SMR" id="B0C2T9"/>
<dbReference type="STRING" id="329726.AM1_1116"/>
<dbReference type="KEGG" id="amr:AM1_1116"/>
<dbReference type="eggNOG" id="COG0322">
    <property type="taxonomic scope" value="Bacteria"/>
</dbReference>
<dbReference type="HOGENOM" id="CLU_014841_3_2_3"/>
<dbReference type="OrthoDB" id="9804933at2"/>
<dbReference type="Proteomes" id="UP000000268">
    <property type="component" value="Chromosome"/>
</dbReference>
<dbReference type="GO" id="GO:0005737">
    <property type="term" value="C:cytoplasm"/>
    <property type="evidence" value="ECO:0007669"/>
    <property type="project" value="UniProtKB-SubCell"/>
</dbReference>
<dbReference type="GO" id="GO:0009380">
    <property type="term" value="C:excinuclease repair complex"/>
    <property type="evidence" value="ECO:0007669"/>
    <property type="project" value="InterPro"/>
</dbReference>
<dbReference type="GO" id="GO:0003677">
    <property type="term" value="F:DNA binding"/>
    <property type="evidence" value="ECO:0007669"/>
    <property type="project" value="UniProtKB-UniRule"/>
</dbReference>
<dbReference type="GO" id="GO:0009381">
    <property type="term" value="F:excinuclease ABC activity"/>
    <property type="evidence" value="ECO:0007669"/>
    <property type="project" value="UniProtKB-UniRule"/>
</dbReference>
<dbReference type="GO" id="GO:0006289">
    <property type="term" value="P:nucleotide-excision repair"/>
    <property type="evidence" value="ECO:0007669"/>
    <property type="project" value="UniProtKB-UniRule"/>
</dbReference>
<dbReference type="GO" id="GO:0009432">
    <property type="term" value="P:SOS response"/>
    <property type="evidence" value="ECO:0007669"/>
    <property type="project" value="UniProtKB-UniRule"/>
</dbReference>
<dbReference type="CDD" id="cd10434">
    <property type="entry name" value="GIY-YIG_UvrC_Cho"/>
    <property type="match status" value="1"/>
</dbReference>
<dbReference type="FunFam" id="3.40.1440.10:FF:000001">
    <property type="entry name" value="UvrABC system protein C"/>
    <property type="match status" value="1"/>
</dbReference>
<dbReference type="Gene3D" id="1.10.150.20">
    <property type="entry name" value="5' to 3' exonuclease, C-terminal subdomain"/>
    <property type="match status" value="1"/>
</dbReference>
<dbReference type="Gene3D" id="3.40.1440.10">
    <property type="entry name" value="GIY-YIG endonuclease"/>
    <property type="match status" value="1"/>
</dbReference>
<dbReference type="Gene3D" id="4.10.860.10">
    <property type="entry name" value="UVR domain"/>
    <property type="match status" value="1"/>
</dbReference>
<dbReference type="Gene3D" id="3.30.420.340">
    <property type="entry name" value="UvrC, RNAse H endonuclease domain"/>
    <property type="match status" value="1"/>
</dbReference>
<dbReference type="HAMAP" id="MF_00203">
    <property type="entry name" value="UvrC"/>
    <property type="match status" value="1"/>
</dbReference>
<dbReference type="InterPro" id="IPR041663">
    <property type="entry name" value="DisA/LigA_HHH"/>
</dbReference>
<dbReference type="InterPro" id="IPR000305">
    <property type="entry name" value="GIY-YIG_endonuc"/>
</dbReference>
<dbReference type="InterPro" id="IPR035901">
    <property type="entry name" value="GIY-YIG_endonuc_sf"/>
</dbReference>
<dbReference type="InterPro" id="IPR047296">
    <property type="entry name" value="GIY-YIG_UvrC_Cho"/>
</dbReference>
<dbReference type="InterPro" id="IPR003583">
    <property type="entry name" value="Hlx-hairpin-Hlx_DNA-bd_motif"/>
</dbReference>
<dbReference type="InterPro" id="IPR010994">
    <property type="entry name" value="RuvA_2-like"/>
</dbReference>
<dbReference type="InterPro" id="IPR001943">
    <property type="entry name" value="UVR_dom"/>
</dbReference>
<dbReference type="InterPro" id="IPR036876">
    <property type="entry name" value="UVR_dom_sf"/>
</dbReference>
<dbReference type="InterPro" id="IPR050066">
    <property type="entry name" value="UvrABC_protein_C"/>
</dbReference>
<dbReference type="InterPro" id="IPR004791">
    <property type="entry name" value="UvrC"/>
</dbReference>
<dbReference type="InterPro" id="IPR001162">
    <property type="entry name" value="UvrC_RNase_H_dom"/>
</dbReference>
<dbReference type="InterPro" id="IPR038476">
    <property type="entry name" value="UvrC_RNase_H_dom_sf"/>
</dbReference>
<dbReference type="NCBIfam" id="NF001824">
    <property type="entry name" value="PRK00558.1-5"/>
    <property type="match status" value="1"/>
</dbReference>
<dbReference type="NCBIfam" id="TIGR00194">
    <property type="entry name" value="uvrC"/>
    <property type="match status" value="1"/>
</dbReference>
<dbReference type="PANTHER" id="PTHR30562:SF1">
    <property type="entry name" value="UVRABC SYSTEM PROTEIN C"/>
    <property type="match status" value="1"/>
</dbReference>
<dbReference type="PANTHER" id="PTHR30562">
    <property type="entry name" value="UVRC/OXIDOREDUCTASE"/>
    <property type="match status" value="1"/>
</dbReference>
<dbReference type="Pfam" id="PF01541">
    <property type="entry name" value="GIY-YIG"/>
    <property type="match status" value="1"/>
</dbReference>
<dbReference type="Pfam" id="PF12826">
    <property type="entry name" value="HHH_2"/>
    <property type="match status" value="1"/>
</dbReference>
<dbReference type="Pfam" id="PF02151">
    <property type="entry name" value="UVR"/>
    <property type="match status" value="1"/>
</dbReference>
<dbReference type="Pfam" id="PF22920">
    <property type="entry name" value="UvrC_RNaseH"/>
    <property type="match status" value="1"/>
</dbReference>
<dbReference type="Pfam" id="PF08459">
    <property type="entry name" value="UvrC_RNaseH_dom"/>
    <property type="match status" value="1"/>
</dbReference>
<dbReference type="SMART" id="SM00465">
    <property type="entry name" value="GIYc"/>
    <property type="match status" value="1"/>
</dbReference>
<dbReference type="SMART" id="SM00278">
    <property type="entry name" value="HhH1"/>
    <property type="match status" value="2"/>
</dbReference>
<dbReference type="SUPFAM" id="SSF46600">
    <property type="entry name" value="C-terminal UvrC-binding domain of UvrB"/>
    <property type="match status" value="1"/>
</dbReference>
<dbReference type="SUPFAM" id="SSF82771">
    <property type="entry name" value="GIY-YIG endonuclease"/>
    <property type="match status" value="1"/>
</dbReference>
<dbReference type="SUPFAM" id="SSF47781">
    <property type="entry name" value="RuvA domain 2-like"/>
    <property type="match status" value="1"/>
</dbReference>
<dbReference type="PROSITE" id="PS50164">
    <property type="entry name" value="GIY_YIG"/>
    <property type="match status" value="1"/>
</dbReference>
<dbReference type="PROSITE" id="PS50151">
    <property type="entry name" value="UVR"/>
    <property type="match status" value="1"/>
</dbReference>
<dbReference type="PROSITE" id="PS50165">
    <property type="entry name" value="UVRC"/>
    <property type="match status" value="1"/>
</dbReference>
<comment type="function">
    <text evidence="1">The UvrABC repair system catalyzes the recognition and processing of DNA lesions. UvrC both incises the 5' and 3' sides of the lesion. The N-terminal half is responsible for the 3' incision and the C-terminal half is responsible for the 5' incision.</text>
</comment>
<comment type="subunit">
    <text evidence="1">Interacts with UvrB in an incision complex.</text>
</comment>
<comment type="subcellular location">
    <subcellularLocation>
        <location evidence="1">Cytoplasm</location>
    </subcellularLocation>
</comment>
<comment type="similarity">
    <text evidence="1">Belongs to the UvrC family.</text>
</comment>
<name>UVRC_ACAM1</name>
<sequence>MTDAVSTTTLLKDRDRLEARLKEIPPEPGVYFMRDANDDILYIGKSKKLRNRVRSYFRQIQDHPPRIELMVHQVADIEFIVTDTEAEALALEANLIKQHQPHFNVLLKDDKKYPYLCVTWSQTYPRIFITRKRRLGKAQDKYYGPYVDVWQLRQTLRLVKRLFPLRQRRKPLFKDRPCLNYEIGRCPGVCQALITPEAYRQILQKVVMIFQGRTSELINTLSLQMEQAAEDLNFEQAARLRDQIKGLQGLGVDQKVALPDDTVSRDAIALAADDQIACVQLFQIRSGRLVGRLGFMADAQSGSLGMILQHVLEAHYGSAEPVELPLEILVQTELPETELLASYLSQRKERKVSITCPQRQIKAELIEMVERNAQYELARTQKSRDRTLNALQDLAELLDLPELPHRIECYDISHIQGSDAVASQVVFIDGLPAKQHYRRYKIRNPNVKAGHSDDFASLAEVLHRRFRQYHLSPEQPRQGTSDWPDLVVIDGGKGQLSAVLESLTKIEVVEDLQIISLAKQREEIFQPGESQPLPTDPEQPGVQLIRRLRDEAHRFAISFHRKKRLERMRRSRLDDIPGLGHHRQKELLAAFRSIDYIREASPEQLKAVPTIGPQLAQKIYDYFHPA</sequence>
<gene>
    <name evidence="1" type="primary">uvrC</name>
    <name type="ordered locus">AM1_1116</name>
</gene>
<feature type="chain" id="PRO_1000077745" description="UvrABC system protein C">
    <location>
        <begin position="1"/>
        <end position="626"/>
    </location>
</feature>
<feature type="domain" description="GIY-YIG" evidence="1">
    <location>
        <begin position="26"/>
        <end position="105"/>
    </location>
</feature>
<feature type="domain" description="UVR" evidence="1">
    <location>
        <begin position="215"/>
        <end position="250"/>
    </location>
</feature>